<comment type="catalytic activity">
    <reaction evidence="1">
        <text>urea + 2 H2O + H(+) = hydrogencarbonate + 2 NH4(+)</text>
        <dbReference type="Rhea" id="RHEA:20557"/>
        <dbReference type="ChEBI" id="CHEBI:15377"/>
        <dbReference type="ChEBI" id="CHEBI:15378"/>
        <dbReference type="ChEBI" id="CHEBI:16199"/>
        <dbReference type="ChEBI" id="CHEBI:17544"/>
        <dbReference type="ChEBI" id="CHEBI:28938"/>
        <dbReference type="EC" id="3.5.1.5"/>
    </reaction>
</comment>
<comment type="pathway">
    <text evidence="1">Nitrogen metabolism; urea degradation; CO(2) and NH(3) from urea (urease route): step 1/1.</text>
</comment>
<comment type="subunit">
    <text evidence="1">Heterotrimer of UreA (gamma), UreB (beta) and UreC (alpha) subunits. Three heterotrimers associate to form the active enzyme.</text>
</comment>
<comment type="subcellular location">
    <subcellularLocation>
        <location evidence="1">Cytoplasm</location>
    </subcellularLocation>
</comment>
<comment type="similarity">
    <text evidence="1">Belongs to the urease beta subunit family.</text>
</comment>
<name>URE2_STAA8</name>
<feature type="chain" id="PRO_1000070777" description="Urease subunit beta">
    <location>
        <begin position="1"/>
        <end position="136"/>
    </location>
</feature>
<feature type="region of interest" description="Disordered" evidence="2">
    <location>
        <begin position="113"/>
        <end position="136"/>
    </location>
</feature>
<proteinExistence type="inferred from homology"/>
<evidence type="ECO:0000255" key="1">
    <source>
        <dbReference type="HAMAP-Rule" id="MF_01954"/>
    </source>
</evidence>
<evidence type="ECO:0000256" key="2">
    <source>
        <dbReference type="SAM" id="MobiDB-lite"/>
    </source>
</evidence>
<keyword id="KW-0963">Cytoplasm</keyword>
<keyword id="KW-0378">Hydrolase</keyword>
<keyword id="KW-1185">Reference proteome</keyword>
<accession>Q2G2K6</accession>
<sequence length="136" mass="15165">MIPGEIITKSTEVEINNHHPETVIEVENTGDRPIQVGSHFHFYEANAALDFEREMAYGKHLDIPAGAAVRFEPGDKKEVQLVEYAGKRKIFGFRGMVNGPIDESRVYRPTDENDEYAGVFGDNGAENVNKKGGKRS</sequence>
<gene>
    <name evidence="1" type="primary">ureB</name>
    <name type="ordered locus">SAOUHSC_02559</name>
</gene>
<protein>
    <recommendedName>
        <fullName evidence="1">Urease subunit beta</fullName>
        <ecNumber evidence="1">3.5.1.5</ecNumber>
    </recommendedName>
    <alternativeName>
        <fullName evidence="1">Urea amidohydrolase subunit beta</fullName>
    </alternativeName>
</protein>
<organism>
    <name type="scientific">Staphylococcus aureus (strain NCTC 8325 / PS 47)</name>
    <dbReference type="NCBI Taxonomy" id="93061"/>
    <lineage>
        <taxon>Bacteria</taxon>
        <taxon>Bacillati</taxon>
        <taxon>Bacillota</taxon>
        <taxon>Bacilli</taxon>
        <taxon>Bacillales</taxon>
        <taxon>Staphylococcaceae</taxon>
        <taxon>Staphylococcus</taxon>
    </lineage>
</organism>
<dbReference type="EC" id="3.5.1.5" evidence="1"/>
<dbReference type="EMBL" id="CP000253">
    <property type="protein sequence ID" value="ABD31572.1"/>
    <property type="molecule type" value="Genomic_DNA"/>
</dbReference>
<dbReference type="RefSeq" id="WP_000612128.1">
    <property type="nucleotide sequence ID" value="NZ_LS483365.1"/>
</dbReference>
<dbReference type="RefSeq" id="YP_501021.1">
    <property type="nucleotide sequence ID" value="NC_007795.1"/>
</dbReference>
<dbReference type="SMR" id="Q2G2K6"/>
<dbReference type="STRING" id="93061.SAOUHSC_02559"/>
<dbReference type="PaxDb" id="1280-SAXN108_2537"/>
<dbReference type="GeneID" id="3921147"/>
<dbReference type="KEGG" id="sao:SAOUHSC_02559"/>
<dbReference type="PATRIC" id="fig|93061.5.peg.2309"/>
<dbReference type="eggNOG" id="COG0832">
    <property type="taxonomic scope" value="Bacteria"/>
</dbReference>
<dbReference type="HOGENOM" id="CLU_129707_2_2_9"/>
<dbReference type="OrthoDB" id="9797217at2"/>
<dbReference type="UniPathway" id="UPA00258">
    <property type="reaction ID" value="UER00370"/>
</dbReference>
<dbReference type="PRO" id="PR:Q2G2K6"/>
<dbReference type="Proteomes" id="UP000008816">
    <property type="component" value="Chromosome"/>
</dbReference>
<dbReference type="GO" id="GO:0035550">
    <property type="term" value="C:urease complex"/>
    <property type="evidence" value="ECO:0007669"/>
    <property type="project" value="InterPro"/>
</dbReference>
<dbReference type="GO" id="GO:0009039">
    <property type="term" value="F:urease activity"/>
    <property type="evidence" value="ECO:0000318"/>
    <property type="project" value="GO_Central"/>
</dbReference>
<dbReference type="GO" id="GO:0043419">
    <property type="term" value="P:urea catabolic process"/>
    <property type="evidence" value="ECO:0000318"/>
    <property type="project" value="GO_Central"/>
</dbReference>
<dbReference type="CDD" id="cd00407">
    <property type="entry name" value="Urease_beta"/>
    <property type="match status" value="1"/>
</dbReference>
<dbReference type="FunFam" id="2.10.150.10:FF:000001">
    <property type="entry name" value="Urease subunit beta"/>
    <property type="match status" value="1"/>
</dbReference>
<dbReference type="Gene3D" id="2.10.150.10">
    <property type="entry name" value="Urease, beta subunit"/>
    <property type="match status" value="1"/>
</dbReference>
<dbReference type="HAMAP" id="MF_01954">
    <property type="entry name" value="Urease_beta"/>
    <property type="match status" value="1"/>
</dbReference>
<dbReference type="InterPro" id="IPR002019">
    <property type="entry name" value="Urease_beta-like"/>
</dbReference>
<dbReference type="InterPro" id="IPR036461">
    <property type="entry name" value="Urease_betasu_sf"/>
</dbReference>
<dbReference type="InterPro" id="IPR050069">
    <property type="entry name" value="Urease_subunit"/>
</dbReference>
<dbReference type="NCBIfam" id="NF009682">
    <property type="entry name" value="PRK13203.1"/>
    <property type="match status" value="1"/>
</dbReference>
<dbReference type="NCBIfam" id="TIGR00192">
    <property type="entry name" value="urease_beta"/>
    <property type="match status" value="1"/>
</dbReference>
<dbReference type="PANTHER" id="PTHR33569">
    <property type="entry name" value="UREASE"/>
    <property type="match status" value="1"/>
</dbReference>
<dbReference type="PANTHER" id="PTHR33569:SF1">
    <property type="entry name" value="UREASE"/>
    <property type="match status" value="1"/>
</dbReference>
<dbReference type="Pfam" id="PF00699">
    <property type="entry name" value="Urease_beta"/>
    <property type="match status" value="1"/>
</dbReference>
<dbReference type="SUPFAM" id="SSF51278">
    <property type="entry name" value="Urease, beta-subunit"/>
    <property type="match status" value="1"/>
</dbReference>
<reference key="1">
    <citation type="book" date="2006" name="Gram positive pathogens, 2nd edition">
        <title>The Staphylococcus aureus NCTC 8325 genome.</title>
        <editorList>
            <person name="Fischetti V."/>
            <person name="Novick R."/>
            <person name="Ferretti J."/>
            <person name="Portnoy D."/>
            <person name="Rood J."/>
        </editorList>
        <authorList>
            <person name="Gillaspy A.F."/>
            <person name="Worrell V."/>
            <person name="Orvis J."/>
            <person name="Roe B.A."/>
            <person name="Dyer D.W."/>
            <person name="Iandolo J.J."/>
        </authorList>
    </citation>
    <scope>NUCLEOTIDE SEQUENCE [LARGE SCALE GENOMIC DNA]</scope>
    <source>
        <strain>NCTC 8325 / PS 47</strain>
    </source>
</reference>